<evidence type="ECO:0000255" key="1">
    <source>
        <dbReference type="HAMAP-Rule" id="MF_01903"/>
    </source>
</evidence>
<keyword id="KW-0997">Cell inner membrane</keyword>
<keyword id="KW-1003">Cell membrane</keyword>
<keyword id="KW-0328">Glycosyltransferase</keyword>
<keyword id="KW-0460">Magnesium</keyword>
<keyword id="KW-0472">Membrane</keyword>
<keyword id="KW-0479">Metal-binding</keyword>
<keyword id="KW-0660">Purine salvage</keyword>
<keyword id="KW-1185">Reference proteome</keyword>
<keyword id="KW-0808">Transferase</keyword>
<dbReference type="EC" id="2.4.2.-" evidence="1"/>
<dbReference type="EC" id="2.4.2.22" evidence="1"/>
<dbReference type="EMBL" id="L42023">
    <property type="protein sequence ID" value="AAC22334.1"/>
    <property type="molecule type" value="Genomic_DNA"/>
</dbReference>
<dbReference type="EMBL" id="L42023">
    <property type="protein sequence ID" value="AAC22352.1"/>
    <property type="molecule type" value="Genomic_DNA"/>
</dbReference>
<dbReference type="PIR" id="A64087">
    <property type="entry name" value="A64087"/>
</dbReference>
<dbReference type="RefSeq" id="NP_438834.1">
    <property type="nucleotide sequence ID" value="NC_000907.1"/>
</dbReference>
<dbReference type="RefSeq" id="NP_438852.1">
    <property type="nucleotide sequence ID" value="NC_000907.1"/>
</dbReference>
<dbReference type="SMR" id="P43859"/>
<dbReference type="STRING" id="71421.HI_0674"/>
<dbReference type="EnsemblBacteria" id="AAC22334">
    <property type="protein sequence ID" value="AAC22334"/>
    <property type="gene ID" value="HI_0674"/>
</dbReference>
<dbReference type="EnsemblBacteria" id="AAC22352">
    <property type="protein sequence ID" value="AAC22352"/>
    <property type="gene ID" value="HI_0692"/>
</dbReference>
<dbReference type="KEGG" id="hin:HI_0674"/>
<dbReference type="KEGG" id="hin:HI_0692"/>
<dbReference type="PATRIC" id="fig|71421.8.peg.704"/>
<dbReference type="eggNOG" id="COG2236">
    <property type="taxonomic scope" value="Bacteria"/>
</dbReference>
<dbReference type="HOGENOM" id="CLU_080904_3_0_6"/>
<dbReference type="OrthoDB" id="9789690at2"/>
<dbReference type="PhylomeDB" id="P43859"/>
<dbReference type="UniPathway" id="UPA00602">
    <property type="reaction ID" value="UER00658"/>
</dbReference>
<dbReference type="UniPathway" id="UPA00909">
    <property type="reaction ID" value="UER00887"/>
</dbReference>
<dbReference type="Proteomes" id="UP000000579">
    <property type="component" value="Chromosome"/>
</dbReference>
<dbReference type="GO" id="GO:0005829">
    <property type="term" value="C:cytosol"/>
    <property type="evidence" value="ECO:0000318"/>
    <property type="project" value="GO_Central"/>
</dbReference>
<dbReference type="GO" id="GO:0005886">
    <property type="term" value="C:plasma membrane"/>
    <property type="evidence" value="ECO:0007669"/>
    <property type="project" value="UniProtKB-SubCell"/>
</dbReference>
<dbReference type="GO" id="GO:0052657">
    <property type="term" value="F:guanine phosphoribosyltransferase activity"/>
    <property type="evidence" value="ECO:0007669"/>
    <property type="project" value="RHEA"/>
</dbReference>
<dbReference type="GO" id="GO:0004422">
    <property type="term" value="F:hypoxanthine phosphoribosyltransferase activity"/>
    <property type="evidence" value="ECO:0000318"/>
    <property type="project" value="GO_Central"/>
</dbReference>
<dbReference type="GO" id="GO:0000287">
    <property type="term" value="F:magnesium ion binding"/>
    <property type="evidence" value="ECO:0007669"/>
    <property type="project" value="UniProtKB-UniRule"/>
</dbReference>
<dbReference type="GO" id="GO:0000310">
    <property type="term" value="F:xanthine phosphoribosyltransferase activity"/>
    <property type="evidence" value="ECO:0000318"/>
    <property type="project" value="GO_Central"/>
</dbReference>
<dbReference type="GO" id="GO:0032263">
    <property type="term" value="P:GMP salvage"/>
    <property type="evidence" value="ECO:0000318"/>
    <property type="project" value="GO_Central"/>
</dbReference>
<dbReference type="GO" id="GO:0032264">
    <property type="term" value="P:IMP salvage"/>
    <property type="evidence" value="ECO:0000318"/>
    <property type="project" value="GO_Central"/>
</dbReference>
<dbReference type="GO" id="GO:0006166">
    <property type="term" value="P:purine ribonucleoside salvage"/>
    <property type="evidence" value="ECO:0007669"/>
    <property type="project" value="UniProtKB-KW"/>
</dbReference>
<dbReference type="GO" id="GO:0032265">
    <property type="term" value="P:XMP salvage"/>
    <property type="evidence" value="ECO:0000318"/>
    <property type="project" value="GO_Central"/>
</dbReference>
<dbReference type="CDD" id="cd06223">
    <property type="entry name" value="PRTases_typeI"/>
    <property type="match status" value="1"/>
</dbReference>
<dbReference type="FunFam" id="3.40.50.2020:FF:000009">
    <property type="entry name" value="Xanthine phosphoribosyltransferase"/>
    <property type="match status" value="1"/>
</dbReference>
<dbReference type="Gene3D" id="3.40.50.2020">
    <property type="match status" value="1"/>
</dbReference>
<dbReference type="HAMAP" id="MF_01903">
    <property type="entry name" value="XGPRT"/>
    <property type="match status" value="1"/>
</dbReference>
<dbReference type="InterPro" id="IPR000836">
    <property type="entry name" value="PRibTrfase_dom"/>
</dbReference>
<dbReference type="InterPro" id="IPR029057">
    <property type="entry name" value="PRTase-like"/>
</dbReference>
<dbReference type="InterPro" id="IPR023747">
    <property type="entry name" value="Xanthine_Guanine_PRibTrfase"/>
</dbReference>
<dbReference type="NCBIfam" id="NF006613">
    <property type="entry name" value="PRK09177.1"/>
    <property type="match status" value="1"/>
</dbReference>
<dbReference type="PANTHER" id="PTHR39563">
    <property type="entry name" value="XANTHINE PHOSPHORIBOSYLTRANSFERASE"/>
    <property type="match status" value="1"/>
</dbReference>
<dbReference type="PANTHER" id="PTHR39563:SF1">
    <property type="entry name" value="XANTHINE-GUANINE PHOSPHORIBOSYLTRANSFERASE"/>
    <property type="match status" value="1"/>
</dbReference>
<dbReference type="Pfam" id="PF00156">
    <property type="entry name" value="Pribosyltran"/>
    <property type="match status" value="1"/>
</dbReference>
<dbReference type="SUPFAM" id="SSF53271">
    <property type="entry name" value="PRTase-like"/>
    <property type="match status" value="1"/>
</dbReference>
<dbReference type="PROSITE" id="PS00103">
    <property type="entry name" value="PUR_PYR_PR_TRANSFER"/>
    <property type="match status" value="1"/>
</dbReference>
<accession>P43859</accession>
<feature type="chain" id="PRO_0000139671" description="Xanthine-guanine phosphoribosyltransferase">
    <location>
        <begin position="1"/>
        <end position="155"/>
    </location>
</feature>
<feature type="binding site" evidence="1">
    <location>
        <begin position="37"/>
        <end position="38"/>
    </location>
    <ligand>
        <name>5-phospho-alpha-D-ribose 1-diphosphate</name>
        <dbReference type="ChEBI" id="CHEBI:58017"/>
    </ligand>
</feature>
<feature type="binding site" evidence="1">
    <location>
        <begin position="91"/>
        <end position="99"/>
    </location>
    <ligand>
        <name>5-phospho-alpha-D-ribose 1-diphosphate</name>
        <dbReference type="ChEBI" id="CHEBI:58017"/>
    </ligand>
</feature>
<feature type="binding site" evidence="1">
    <location>
        <position position="92"/>
    </location>
    <ligand>
        <name>Mg(2+)</name>
        <dbReference type="ChEBI" id="CHEBI:18420"/>
    </ligand>
</feature>
<feature type="binding site" evidence="1">
    <location>
        <begin position="95"/>
        <end position="99"/>
    </location>
    <ligand>
        <name>GMP</name>
        <dbReference type="ChEBI" id="CHEBI:58115"/>
    </ligand>
</feature>
<feature type="binding site" evidence="1">
    <location>
        <position position="95"/>
    </location>
    <ligand>
        <name>guanine</name>
        <dbReference type="ChEBI" id="CHEBI:16235"/>
    </ligand>
</feature>
<feature type="binding site" evidence="1">
    <location>
        <position position="95"/>
    </location>
    <ligand>
        <name>xanthine</name>
        <dbReference type="ChEBI" id="CHEBI:17712"/>
    </ligand>
</feature>
<feature type="binding site" evidence="1">
    <location>
        <begin position="137"/>
        <end position="138"/>
    </location>
    <ligand>
        <name>GMP</name>
        <dbReference type="ChEBI" id="CHEBI:58115"/>
    </ligand>
</feature>
<feature type="binding site" evidence="1">
    <location>
        <position position="138"/>
    </location>
    <ligand>
        <name>guanine</name>
        <dbReference type="ChEBI" id="CHEBI:16235"/>
    </ligand>
</feature>
<feature type="binding site" evidence="1">
    <location>
        <position position="138"/>
    </location>
    <ligand>
        <name>xanthine</name>
        <dbReference type="ChEBI" id="CHEBI:17712"/>
    </ligand>
</feature>
<proteinExistence type="inferred from homology"/>
<organism>
    <name type="scientific">Haemophilus influenzae (strain ATCC 51907 / DSM 11121 / KW20 / Rd)</name>
    <dbReference type="NCBI Taxonomy" id="71421"/>
    <lineage>
        <taxon>Bacteria</taxon>
        <taxon>Pseudomonadati</taxon>
        <taxon>Pseudomonadota</taxon>
        <taxon>Gammaproteobacteria</taxon>
        <taxon>Pasteurellales</taxon>
        <taxon>Pasteurellaceae</taxon>
        <taxon>Haemophilus</taxon>
    </lineage>
</organism>
<comment type="function">
    <text>Acts on guanine, xanthine and to a lesser extent hypoxanthine.</text>
</comment>
<comment type="function">
    <text evidence="1">Purine salvage pathway enzyme that catalyzes the transfer of the ribosyl-5-phosphate group from 5-phospho-alpha-D-ribose 1-diphosphate (PRPP) to the N9 position of the 6-oxopurines guanine and xanthine to form the corresponding ribonucleotides GMP (guanosine 5'-monophosphate) and XMP (xanthosine 5'-monophosphate), with the release of PPi. To a lesser extent, also acts on hypoxanthine.</text>
</comment>
<comment type="catalytic activity">
    <reaction evidence="1">
        <text>GMP + diphosphate = guanine + 5-phospho-alpha-D-ribose 1-diphosphate</text>
        <dbReference type="Rhea" id="RHEA:25424"/>
        <dbReference type="ChEBI" id="CHEBI:16235"/>
        <dbReference type="ChEBI" id="CHEBI:33019"/>
        <dbReference type="ChEBI" id="CHEBI:58017"/>
        <dbReference type="ChEBI" id="CHEBI:58115"/>
    </reaction>
    <physiologicalReaction direction="right-to-left" evidence="1">
        <dbReference type="Rhea" id="RHEA:25426"/>
    </physiologicalReaction>
</comment>
<comment type="catalytic activity">
    <reaction evidence="1">
        <text>XMP + diphosphate = xanthine + 5-phospho-alpha-D-ribose 1-diphosphate</text>
        <dbReference type="Rhea" id="RHEA:10800"/>
        <dbReference type="ChEBI" id="CHEBI:17712"/>
        <dbReference type="ChEBI" id="CHEBI:33019"/>
        <dbReference type="ChEBI" id="CHEBI:57464"/>
        <dbReference type="ChEBI" id="CHEBI:58017"/>
        <dbReference type="EC" id="2.4.2.22"/>
    </reaction>
    <physiologicalReaction direction="right-to-left" evidence="1">
        <dbReference type="Rhea" id="RHEA:10802"/>
    </physiologicalReaction>
</comment>
<comment type="catalytic activity">
    <reaction evidence="1">
        <text>IMP + diphosphate = hypoxanthine + 5-phospho-alpha-D-ribose 1-diphosphate</text>
        <dbReference type="Rhea" id="RHEA:17973"/>
        <dbReference type="ChEBI" id="CHEBI:17368"/>
        <dbReference type="ChEBI" id="CHEBI:33019"/>
        <dbReference type="ChEBI" id="CHEBI:58017"/>
        <dbReference type="ChEBI" id="CHEBI:58053"/>
    </reaction>
    <physiologicalReaction direction="right-to-left" evidence="1">
        <dbReference type="Rhea" id="RHEA:17975"/>
    </physiologicalReaction>
</comment>
<comment type="cofactor">
    <cofactor evidence="1">
        <name>Mg(2+)</name>
        <dbReference type="ChEBI" id="CHEBI:18420"/>
    </cofactor>
</comment>
<comment type="pathway">
    <text evidence="1">Purine metabolism; GMP biosynthesis via salvage pathway; GMP from guanine: step 1/1.</text>
</comment>
<comment type="pathway">
    <text evidence="1">Purine metabolism; XMP biosynthesis via salvage pathway; XMP from xanthine: step 1/1.</text>
</comment>
<comment type="subunit">
    <text evidence="1">Homotetramer.</text>
</comment>
<comment type="subcellular location">
    <subcellularLocation>
        <location evidence="1">Cell inner membrane</location>
        <topology evidence="1">Peripheral membrane protein</topology>
    </subcellularLocation>
</comment>
<comment type="similarity">
    <text evidence="1">Belongs to the purine/pyrimidine phosphoribosyltransferase family. XGPT subfamily.</text>
</comment>
<sequence length="155" mass="17325">MSEKYVVTWDMFQMHARRLSERLLPASQWKGIIAVSRGGLFPAAVLARELGLRHIETVCIASYHDHNNQGELQVLHAAQVPNGGEGFIVVDDLVDTGNTARAIRQMYPNAKFVTVFAKPAGAELVDDYVIDIPQNTWIEQPWDLGLTFVPPLSRK</sequence>
<reference key="1">
    <citation type="journal article" date="1995" name="Science">
        <title>Whole-genome random sequencing and assembly of Haemophilus influenzae Rd.</title>
        <authorList>
            <person name="Fleischmann R.D."/>
            <person name="Adams M.D."/>
            <person name="White O."/>
            <person name="Clayton R.A."/>
            <person name="Kirkness E.F."/>
            <person name="Kerlavage A.R."/>
            <person name="Bult C.J."/>
            <person name="Tomb J.-F."/>
            <person name="Dougherty B.A."/>
            <person name="Merrick J.M."/>
            <person name="McKenney K."/>
            <person name="Sutton G.G."/>
            <person name="FitzHugh W."/>
            <person name="Fields C.A."/>
            <person name="Gocayne J.D."/>
            <person name="Scott J.D."/>
            <person name="Shirley R."/>
            <person name="Liu L.-I."/>
            <person name="Glodek A."/>
            <person name="Kelley J.M."/>
            <person name="Weidman J.F."/>
            <person name="Phillips C.A."/>
            <person name="Spriggs T."/>
            <person name="Hedblom E."/>
            <person name="Cotton M.D."/>
            <person name="Utterback T.R."/>
            <person name="Hanna M.C."/>
            <person name="Nguyen D.T."/>
            <person name="Saudek D.M."/>
            <person name="Brandon R.C."/>
            <person name="Fine L.D."/>
            <person name="Fritchman J.L."/>
            <person name="Fuhrmann J.L."/>
            <person name="Geoghagen N.S.M."/>
            <person name="Gnehm C.L."/>
            <person name="McDonald L.A."/>
            <person name="Small K.V."/>
            <person name="Fraser C.M."/>
            <person name="Smith H.O."/>
            <person name="Venter J.C."/>
        </authorList>
    </citation>
    <scope>NUCLEOTIDE SEQUENCE [LARGE SCALE GENOMIC DNA]</scope>
    <source>
        <strain>ATCC 51907 / DSM 11121 / KW20 / Rd</strain>
    </source>
</reference>
<gene>
    <name evidence="1" type="primary">gpt1</name>
    <name type="synonym">gptA</name>
    <name type="ordered locus">HI_0674</name>
</gene>
<gene>
    <name evidence="1" type="primary">gpt2</name>
    <name type="synonym">gptB</name>
    <name type="ordered locus">HI_0692</name>
</gene>
<protein>
    <recommendedName>
        <fullName evidence="1">Xanthine-guanine phosphoribosyltransferase</fullName>
        <shortName evidence="1">XGPRT</shortName>
        <ecNumber evidence="1">2.4.2.-</ecNumber>
        <ecNumber evidence="1">2.4.2.22</ecNumber>
    </recommendedName>
    <alternativeName>
        <fullName evidence="1">Xanthine phosphoribosyltransferase</fullName>
    </alternativeName>
</protein>
<name>XGPT_HAEIN</name>